<keyword id="KW-0963">Cytoplasm</keyword>
<keyword id="KW-0520">NAD</keyword>
<keyword id="KW-0560">Oxidoreductase</keyword>
<keyword id="KW-0664">Pyridoxine biosynthesis</keyword>
<keyword id="KW-1185">Reference proteome</keyword>
<comment type="function">
    <text evidence="1">Catalyzes the NAD-dependent conversion of D-erythrose 4-phosphate to 4-phosphoerythronate.</text>
</comment>
<comment type="catalytic activity">
    <reaction evidence="1">
        <text>D-erythrose 4-phosphate + NAD(+) + H2O = 4-phospho-D-erythronate + NADH + 2 H(+)</text>
        <dbReference type="Rhea" id="RHEA:12056"/>
        <dbReference type="ChEBI" id="CHEBI:15377"/>
        <dbReference type="ChEBI" id="CHEBI:15378"/>
        <dbReference type="ChEBI" id="CHEBI:16897"/>
        <dbReference type="ChEBI" id="CHEBI:57540"/>
        <dbReference type="ChEBI" id="CHEBI:57945"/>
        <dbReference type="ChEBI" id="CHEBI:58766"/>
        <dbReference type="EC" id="1.2.1.72"/>
    </reaction>
</comment>
<comment type="pathway">
    <text evidence="1">Cofactor biosynthesis; pyridoxine 5'-phosphate biosynthesis; pyridoxine 5'-phosphate from D-erythrose 4-phosphate: step 1/5.</text>
</comment>
<comment type="subunit">
    <text evidence="1">Homotetramer.</text>
</comment>
<comment type="subcellular location">
    <subcellularLocation>
        <location evidence="1">Cytoplasm</location>
    </subcellularLocation>
</comment>
<comment type="similarity">
    <text evidence="1">Belongs to the glyceraldehyde-3-phosphate dehydrogenase family. Epd subfamily.</text>
</comment>
<organism>
    <name type="scientific">Escherichia coli O139:H28 (strain E24377A / ETEC)</name>
    <dbReference type="NCBI Taxonomy" id="331111"/>
    <lineage>
        <taxon>Bacteria</taxon>
        <taxon>Pseudomonadati</taxon>
        <taxon>Pseudomonadota</taxon>
        <taxon>Gammaproteobacteria</taxon>
        <taxon>Enterobacterales</taxon>
        <taxon>Enterobacteriaceae</taxon>
        <taxon>Escherichia</taxon>
    </lineage>
</organism>
<accession>A7ZR35</accession>
<proteinExistence type="inferred from homology"/>
<dbReference type="EC" id="1.2.1.72" evidence="1"/>
<dbReference type="EMBL" id="CP000800">
    <property type="protein sequence ID" value="ABV20421.1"/>
    <property type="molecule type" value="Genomic_DNA"/>
</dbReference>
<dbReference type="RefSeq" id="WP_000218480.1">
    <property type="nucleotide sequence ID" value="NC_009801.1"/>
</dbReference>
<dbReference type="SMR" id="A7ZR35"/>
<dbReference type="GeneID" id="93779071"/>
<dbReference type="KEGG" id="ecw:EcE24377A_3255"/>
<dbReference type="HOGENOM" id="CLU_030140_0_2_6"/>
<dbReference type="UniPathway" id="UPA00244">
    <property type="reaction ID" value="UER00309"/>
</dbReference>
<dbReference type="Proteomes" id="UP000001122">
    <property type="component" value="Chromosome"/>
</dbReference>
<dbReference type="GO" id="GO:0005737">
    <property type="term" value="C:cytoplasm"/>
    <property type="evidence" value="ECO:0007669"/>
    <property type="project" value="UniProtKB-SubCell"/>
</dbReference>
<dbReference type="GO" id="GO:0048001">
    <property type="term" value="F:erythrose-4-phosphate dehydrogenase activity"/>
    <property type="evidence" value="ECO:0007669"/>
    <property type="project" value="UniProtKB-UniRule"/>
</dbReference>
<dbReference type="GO" id="GO:0051287">
    <property type="term" value="F:NAD binding"/>
    <property type="evidence" value="ECO:0007669"/>
    <property type="project" value="InterPro"/>
</dbReference>
<dbReference type="GO" id="GO:0042823">
    <property type="term" value="P:pyridoxal phosphate biosynthetic process"/>
    <property type="evidence" value="ECO:0007669"/>
    <property type="project" value="UniProtKB-UniRule"/>
</dbReference>
<dbReference type="GO" id="GO:0008615">
    <property type="term" value="P:pyridoxine biosynthetic process"/>
    <property type="evidence" value="ECO:0007669"/>
    <property type="project" value="UniProtKB-UniRule"/>
</dbReference>
<dbReference type="CDD" id="cd23937">
    <property type="entry name" value="GAPDH_C_E4PDH"/>
    <property type="match status" value="1"/>
</dbReference>
<dbReference type="CDD" id="cd17892">
    <property type="entry name" value="GAPDH_N_E4PDH"/>
    <property type="match status" value="1"/>
</dbReference>
<dbReference type="FunFam" id="3.30.360.10:FF:000007">
    <property type="entry name" value="D-erythrose-4-phosphate dehydrogenase"/>
    <property type="match status" value="1"/>
</dbReference>
<dbReference type="FunFam" id="3.40.50.720:FF:000001">
    <property type="entry name" value="Glyceraldehyde-3-phosphate dehydrogenase"/>
    <property type="match status" value="1"/>
</dbReference>
<dbReference type="Gene3D" id="3.30.360.10">
    <property type="entry name" value="Dihydrodipicolinate Reductase, domain 2"/>
    <property type="match status" value="1"/>
</dbReference>
<dbReference type="Gene3D" id="3.40.50.720">
    <property type="entry name" value="NAD(P)-binding Rossmann-like Domain"/>
    <property type="match status" value="1"/>
</dbReference>
<dbReference type="HAMAP" id="MF_01640">
    <property type="entry name" value="E4P_dehydrog"/>
    <property type="match status" value="1"/>
</dbReference>
<dbReference type="InterPro" id="IPR006422">
    <property type="entry name" value="E4P_DH_bac"/>
</dbReference>
<dbReference type="InterPro" id="IPR020831">
    <property type="entry name" value="GlycerAld/Erythrose_P_DH"/>
</dbReference>
<dbReference type="InterPro" id="IPR020830">
    <property type="entry name" value="GlycerAld_3-P_DH_AS"/>
</dbReference>
<dbReference type="InterPro" id="IPR020829">
    <property type="entry name" value="GlycerAld_3-P_DH_cat"/>
</dbReference>
<dbReference type="InterPro" id="IPR020828">
    <property type="entry name" value="GlycerAld_3-P_DH_NAD(P)-bd"/>
</dbReference>
<dbReference type="InterPro" id="IPR036291">
    <property type="entry name" value="NAD(P)-bd_dom_sf"/>
</dbReference>
<dbReference type="NCBIfam" id="TIGR01532">
    <property type="entry name" value="E4PD_g-proteo"/>
    <property type="match status" value="1"/>
</dbReference>
<dbReference type="NCBIfam" id="NF010058">
    <property type="entry name" value="PRK13535.1"/>
    <property type="match status" value="1"/>
</dbReference>
<dbReference type="PANTHER" id="PTHR43148">
    <property type="entry name" value="GLYCERALDEHYDE-3-PHOSPHATE DEHYDROGENASE 2"/>
    <property type="match status" value="1"/>
</dbReference>
<dbReference type="Pfam" id="PF02800">
    <property type="entry name" value="Gp_dh_C"/>
    <property type="match status" value="1"/>
</dbReference>
<dbReference type="Pfam" id="PF00044">
    <property type="entry name" value="Gp_dh_N"/>
    <property type="match status" value="1"/>
</dbReference>
<dbReference type="PIRSF" id="PIRSF000149">
    <property type="entry name" value="GAP_DH"/>
    <property type="match status" value="1"/>
</dbReference>
<dbReference type="PRINTS" id="PR00078">
    <property type="entry name" value="G3PDHDRGNASE"/>
</dbReference>
<dbReference type="SMART" id="SM00846">
    <property type="entry name" value="Gp_dh_N"/>
    <property type="match status" value="1"/>
</dbReference>
<dbReference type="SUPFAM" id="SSF55347">
    <property type="entry name" value="Glyceraldehyde-3-phosphate dehydrogenase-like, C-terminal domain"/>
    <property type="match status" value="1"/>
</dbReference>
<dbReference type="SUPFAM" id="SSF51735">
    <property type="entry name" value="NAD(P)-binding Rossmann-fold domains"/>
    <property type="match status" value="1"/>
</dbReference>
<dbReference type="PROSITE" id="PS00071">
    <property type="entry name" value="GAPDH"/>
    <property type="match status" value="1"/>
</dbReference>
<feature type="chain" id="PRO_1000069892" description="D-erythrose-4-phosphate dehydrogenase">
    <location>
        <begin position="1"/>
        <end position="339"/>
    </location>
</feature>
<feature type="active site" description="Nucleophile" evidence="1">
    <location>
        <position position="155"/>
    </location>
</feature>
<feature type="binding site" evidence="1">
    <location>
        <begin position="12"/>
        <end position="13"/>
    </location>
    <ligand>
        <name>NAD(+)</name>
        <dbReference type="ChEBI" id="CHEBI:57540"/>
    </ligand>
</feature>
<feature type="binding site" evidence="1">
    <location>
        <position position="81"/>
    </location>
    <ligand>
        <name>NAD(+)</name>
        <dbReference type="ChEBI" id="CHEBI:57540"/>
    </ligand>
</feature>
<feature type="binding site" evidence="1">
    <location>
        <begin position="154"/>
        <end position="156"/>
    </location>
    <ligand>
        <name>substrate</name>
    </ligand>
</feature>
<feature type="binding site" evidence="1">
    <location>
        <position position="200"/>
    </location>
    <ligand>
        <name>substrate</name>
    </ligand>
</feature>
<feature type="binding site" evidence="1">
    <location>
        <begin position="213"/>
        <end position="214"/>
    </location>
    <ligand>
        <name>substrate</name>
    </ligand>
</feature>
<feature type="binding site" evidence="1">
    <location>
        <position position="236"/>
    </location>
    <ligand>
        <name>substrate</name>
    </ligand>
</feature>
<feature type="binding site" evidence="1">
    <location>
        <position position="318"/>
    </location>
    <ligand>
        <name>NAD(+)</name>
        <dbReference type="ChEBI" id="CHEBI:57540"/>
    </ligand>
</feature>
<feature type="site" description="Activates thiol group during catalysis" evidence="1">
    <location>
        <position position="182"/>
    </location>
</feature>
<evidence type="ECO:0000255" key="1">
    <source>
        <dbReference type="HAMAP-Rule" id="MF_01640"/>
    </source>
</evidence>
<reference key="1">
    <citation type="journal article" date="2008" name="J. Bacteriol.">
        <title>The pangenome structure of Escherichia coli: comparative genomic analysis of E. coli commensal and pathogenic isolates.</title>
        <authorList>
            <person name="Rasko D.A."/>
            <person name="Rosovitz M.J."/>
            <person name="Myers G.S.A."/>
            <person name="Mongodin E.F."/>
            <person name="Fricke W.F."/>
            <person name="Gajer P."/>
            <person name="Crabtree J."/>
            <person name="Sebaihia M."/>
            <person name="Thomson N.R."/>
            <person name="Chaudhuri R."/>
            <person name="Henderson I.R."/>
            <person name="Sperandio V."/>
            <person name="Ravel J."/>
        </authorList>
    </citation>
    <scope>NUCLEOTIDE SEQUENCE [LARGE SCALE GENOMIC DNA]</scope>
    <source>
        <strain>E24377A / ETEC</strain>
    </source>
</reference>
<protein>
    <recommendedName>
        <fullName evidence="1">D-erythrose-4-phosphate dehydrogenase</fullName>
        <shortName evidence="1">E4PDH</shortName>
        <ecNumber evidence="1">1.2.1.72</ecNumber>
    </recommendedName>
</protein>
<name>E4PD_ECO24</name>
<gene>
    <name evidence="1" type="primary">epd</name>
    <name type="ordered locus">EcE24377A_3255</name>
</gene>
<sequence>MTVRVAINGFGRIGRNVVRALYESGRRAEITVVAINELADAAGMAHLLKYDTSHGRFAWEVRQERDQLFVGDDAIRVLHERSLQSLPWRELGVDVVLDCTGVYGSREHGEAHIAAGAKKVLFSHPGSNDLDATVVYGVNQDQLRAEHRIVSNASCTTNCIIPVIKLLDDAYGIESGTVTTIHSAMHDQQVIDAYHPDLRRTRAASQSIIPVDTKLAAGITRFFPQFNDRFEAIAVRVPTINVTAIDLSVTVKKPVKANEVNLLLQKAAQGAFHGIVDYTELPLVSVDFNHDPHSAIVDGTQTRVSGAHLIKTLVWCDNEWGFANRMLDTTLAMATVAFR</sequence>